<proteinExistence type="evidence at protein level"/>
<comment type="function">
    <text evidence="1">E3 ubiquitin-protein ligase which accepts ubiquitin from E2 ubiquitin-conjugating enzymes in the form of a thioester and then directly transfers the ubiquitin to targeted substrates. Mediates the degradation of the iron exporter ferroportin/SLC40A1 and thus regulates iron homeostasis.</text>
</comment>
<comment type="catalytic activity">
    <reaction evidence="1">
        <text>[E2 ubiquitin-conjugating enzyme]-S-ubiquitinyl-L-cysteine + [acceptor protein]-L-lysine = [E2 ubiquitin-conjugating enzyme]-L-cysteine + [acceptor protein]-N(6)-ubiquitinyl-L-lysine.</text>
        <dbReference type="EC" id="2.3.2.31"/>
    </reaction>
</comment>
<comment type="pathway">
    <text>Protein modification; protein ubiquitination.</text>
</comment>
<comment type="subunit">
    <text evidence="6">Interacts with HAX1.</text>
</comment>
<comment type="subcellular location">
    <subcellularLocation>
        <location evidence="9">Membrane</location>
        <topology evidence="9">Single-pass membrane protein</topology>
    </subcellularLocation>
    <subcellularLocation>
        <location evidence="6">Cytoplasm</location>
    </subcellularLocation>
</comment>
<comment type="alternative products">
    <event type="alternative splicing"/>
    <isoform>
        <id>Q8TC41-1</id>
        <name>1</name>
        <sequence type="displayed"/>
    </isoform>
    <isoform>
        <id>Q8TC41-2</id>
        <name>2</name>
        <sequence type="described" ref="VSP_054705 VSP_054706"/>
    </isoform>
</comment>
<comment type="tissue specificity">
    <text evidence="6">Mainly expressed in testis and skeletal muscle.</text>
</comment>
<comment type="domain">
    <text evidence="2">Members of the RBR family are atypical E3 ligases. They interact with the E2 conjugating enzyme UBE2L3 and function like HECT-type E3 enzymes: they bind E2s via the first RING domain, but require an obligate trans-thiolation step during the ubiquitin transfer, requiring a conserved cysteine residue in the second RING domain.</text>
</comment>
<comment type="similarity">
    <text evidence="9">Belongs to the RBR family. RNF217 subfamily.</text>
</comment>
<accession>Q8TC41</accession>
<accession>H7C5V4</accession>
<accession>Q5TCA4</accession>
<accession>Q9BX48</accession>
<feature type="chain" id="PRO_0000084128" description="E3 ubiquitin-protein ligase RNF217">
    <location>
        <begin position="1"/>
        <end position="542"/>
    </location>
</feature>
<feature type="transmembrane region" description="Helical" evidence="3">
    <location>
        <begin position="503"/>
        <end position="523"/>
    </location>
</feature>
<feature type="zinc finger region" description="RING-type 1" evidence="4">
    <location>
        <begin position="263"/>
        <end position="309"/>
    </location>
</feature>
<feature type="zinc finger region" description="IBR-type" evidence="4">
    <location>
        <begin position="328"/>
        <end position="396"/>
    </location>
</feature>
<feature type="zinc finger region" description="RING-type 2; atypical" evidence="4">
    <location>
        <begin position="423"/>
        <end position="452"/>
    </location>
</feature>
<feature type="region of interest" description="Disordered" evidence="5">
    <location>
        <begin position="1"/>
        <end position="140"/>
    </location>
</feature>
<feature type="region of interest" description="Disordered" evidence="5">
    <location>
        <begin position="176"/>
        <end position="216"/>
    </location>
</feature>
<feature type="region of interest" description="TRIAD supradomain" evidence="4">
    <location>
        <begin position="259"/>
        <end position="478"/>
    </location>
</feature>
<feature type="compositionally biased region" description="Low complexity" evidence="5">
    <location>
        <begin position="37"/>
        <end position="50"/>
    </location>
</feature>
<feature type="compositionally biased region" description="Acidic residues" evidence="5">
    <location>
        <begin position="122"/>
        <end position="132"/>
    </location>
</feature>
<feature type="compositionally biased region" description="Pro residues" evidence="5">
    <location>
        <begin position="185"/>
        <end position="196"/>
    </location>
</feature>
<feature type="compositionally biased region" description="Low complexity" evidence="5">
    <location>
        <begin position="197"/>
        <end position="213"/>
    </location>
</feature>
<feature type="active site" evidence="4">
    <location>
        <position position="436"/>
    </location>
</feature>
<feature type="binding site" evidence="4">
    <location>
        <position position="263"/>
    </location>
    <ligand>
        <name>Zn(2+)</name>
        <dbReference type="ChEBI" id="CHEBI:29105"/>
        <label>1</label>
    </ligand>
</feature>
<feature type="binding site" evidence="4">
    <location>
        <position position="266"/>
    </location>
    <ligand>
        <name>Zn(2+)</name>
        <dbReference type="ChEBI" id="CHEBI:29105"/>
        <label>1</label>
    </ligand>
</feature>
<feature type="binding site" evidence="4">
    <location>
        <position position="283"/>
    </location>
    <ligand>
        <name>Zn(2+)</name>
        <dbReference type="ChEBI" id="CHEBI:29105"/>
        <label>1</label>
    </ligand>
</feature>
<feature type="binding site" evidence="4">
    <location>
        <position position="286"/>
    </location>
    <ligand>
        <name>Zn(2+)</name>
        <dbReference type="ChEBI" id="CHEBI:29105"/>
        <label>1</label>
    </ligand>
</feature>
<feature type="binding site" evidence="4">
    <location>
        <position position="383"/>
    </location>
    <ligand>
        <name>Zn(2+)</name>
        <dbReference type="ChEBI" id="CHEBI:29105"/>
        <label>2</label>
    </ligand>
</feature>
<feature type="binding site" evidence="4">
    <location>
        <position position="386"/>
    </location>
    <ligand>
        <name>Zn(2+)</name>
        <dbReference type="ChEBI" id="CHEBI:29105"/>
        <label>2</label>
    </ligand>
</feature>
<feature type="binding site" evidence="4">
    <location>
        <position position="391"/>
    </location>
    <ligand>
        <name>Zn(2+)</name>
        <dbReference type="ChEBI" id="CHEBI:29105"/>
        <label>2</label>
    </ligand>
</feature>
<feature type="binding site" evidence="4">
    <location>
        <position position="396"/>
    </location>
    <ligand>
        <name>Zn(2+)</name>
        <dbReference type="ChEBI" id="CHEBI:29105"/>
        <label>2</label>
    </ligand>
</feature>
<feature type="binding site" evidence="4">
    <location>
        <position position="423"/>
    </location>
    <ligand>
        <name>Zn(2+)</name>
        <dbReference type="ChEBI" id="CHEBI:29105"/>
        <label>3</label>
    </ligand>
</feature>
<feature type="binding site" evidence="4">
    <location>
        <position position="426"/>
    </location>
    <ligand>
        <name>Zn(2+)</name>
        <dbReference type="ChEBI" id="CHEBI:29105"/>
        <label>3</label>
    </ligand>
</feature>
<feature type="binding site" evidence="4">
    <location>
        <position position="441"/>
    </location>
    <ligand>
        <name>Zn(2+)</name>
        <dbReference type="ChEBI" id="CHEBI:29105"/>
        <label>3</label>
    </ligand>
</feature>
<feature type="binding site" evidence="4">
    <location>
        <position position="444"/>
    </location>
    <ligand>
        <name>Zn(2+)</name>
        <dbReference type="ChEBI" id="CHEBI:29105"/>
        <label>3</label>
    </ligand>
</feature>
<feature type="binding site" evidence="4">
    <location>
        <position position="449"/>
    </location>
    <ligand>
        <name>Zn(2+)</name>
        <dbReference type="ChEBI" id="CHEBI:29105"/>
        <label>4</label>
    </ligand>
</feature>
<feature type="binding site" evidence="4">
    <location>
        <position position="452"/>
    </location>
    <ligand>
        <name>Zn(2+)</name>
        <dbReference type="ChEBI" id="CHEBI:29105"/>
        <label>4</label>
    </ligand>
</feature>
<feature type="binding site" evidence="4">
    <location>
        <position position="465"/>
    </location>
    <ligand>
        <name>Zn(2+)</name>
        <dbReference type="ChEBI" id="CHEBI:29105"/>
        <label>4</label>
    </ligand>
</feature>
<feature type="binding site" evidence="4">
    <location>
        <position position="474"/>
    </location>
    <ligand>
        <name>Zn(2+)</name>
        <dbReference type="ChEBI" id="CHEBI:29105"/>
        <label>4</label>
    </ligand>
</feature>
<feature type="splice variant" id="VSP_054705" description="In isoform 2." evidence="7">
    <original>MGEEQSTVSGGGGPQESQTLASGTAGHPEPPRPQGDSARAPPLRAASAEPSGGGCGSDWGCADTSAPEPARSLGPPGWSKSRAPAQPAGLALTGPLNPQTLPLQLELEEEEEEAGDRKEGGDEQQEAPPGEELEPRTRVGAADGLVLDVLGQRRPSLAKRQVFCSVYCVESDLPEAPASEQLSPPASPPGAPPVLNPPSTRSSFPSPRLSLPTDSLSPDGGSIELEFYLAPEPFSMPSLLGAPPYSGLGGVGDPYVPLMVLMCRVCLEDKPIKPLPCCKKAVCEECLKVYLSAQ</original>
    <variation>MK</variation>
    <location>
        <begin position="1"/>
        <end position="294"/>
    </location>
</feature>
<feature type="splice variant" id="VSP_054706" description="In isoform 2." evidence="7">
    <original>GLFVFPIYCLCKKQRKRSRTGMHW</original>
    <variation>VEEIKTYWNLISGRTRNQTQHLAPQPVLLSDMLYCLKQVFICISYLLPL</variation>
    <location>
        <begin position="519"/>
        <end position="542"/>
    </location>
</feature>
<feature type="sequence variant" id="VAR_024160" description="In dbSNP:rs475076.">
    <original>V</original>
    <variation>I</variation>
    <location>
        <position position="381"/>
    </location>
</feature>
<organism>
    <name type="scientific">Homo sapiens</name>
    <name type="common">Human</name>
    <dbReference type="NCBI Taxonomy" id="9606"/>
    <lineage>
        <taxon>Eukaryota</taxon>
        <taxon>Metazoa</taxon>
        <taxon>Chordata</taxon>
        <taxon>Craniata</taxon>
        <taxon>Vertebrata</taxon>
        <taxon>Euteleostomi</taxon>
        <taxon>Mammalia</taxon>
        <taxon>Eutheria</taxon>
        <taxon>Euarchontoglires</taxon>
        <taxon>Primates</taxon>
        <taxon>Haplorrhini</taxon>
        <taxon>Catarrhini</taxon>
        <taxon>Hominidae</taxon>
        <taxon>Homo</taxon>
    </lineage>
</organism>
<name>RN217_HUMAN</name>
<keyword id="KW-0025">Alternative splicing</keyword>
<keyword id="KW-0963">Cytoplasm</keyword>
<keyword id="KW-0472">Membrane</keyword>
<keyword id="KW-0479">Metal-binding</keyword>
<keyword id="KW-1267">Proteomics identification</keyword>
<keyword id="KW-1185">Reference proteome</keyword>
<keyword id="KW-0677">Repeat</keyword>
<keyword id="KW-0808">Transferase</keyword>
<keyword id="KW-0812">Transmembrane</keyword>
<keyword id="KW-1133">Transmembrane helix</keyword>
<keyword id="KW-0833">Ubl conjugation pathway</keyword>
<keyword id="KW-0862">Zinc</keyword>
<keyword id="KW-0863">Zinc-finger</keyword>
<sequence>MGEEQSTVSGGGGPQESQTLASGTAGHPEPPRPQGDSARAPPLRAASAEPSGGGCGSDWGCADTSAPEPARSLGPPGWSKSRAPAQPAGLALTGPLNPQTLPLQLELEEEEEEAGDRKEGGDEQQEAPPGEELEPRTRVGAADGLVLDVLGQRRPSLAKRQVFCSVYCVESDLPEAPASEQLSPPASPPGAPPVLNPPSTRSSFPSPRLSLPTDSLSPDGGSIELEFYLAPEPFSMPSLLGAPPYSGLGGVGDPYVPLMVLMCRVCLEDKPIKPLPCCKKAVCEECLKVYLSAQVQLGQVEIKCPITECFEFLEETTVVYNLTHEDSIKYKYFLELGRIDSSTKPCPQCKHFTTFKKKGHIPTPSRSESKYKIQCPTCQFVWCFKCHSPWHEGVNCKEYKKGDKLLRHWASEIEHGQRNAQKCPKCKIHIQRTEGCDHMTCSQCNTNFCYRCGERYRQLRFFGDHTSNLSIFGCKYRYLPERPHLRRLVRGSVCAGKLFIAPLIMVLGLALGAIAVVIGLFVFPIYCLCKKQRKRSRTGMHW</sequence>
<gene>
    <name type="primary">RNF217</name>
    <name type="synonym">C6orf172</name>
    <name type="synonym">IBRDC1</name>
    <name evidence="8" type="synonym">OSTL</name>
</gene>
<dbReference type="EC" id="2.3.2.31" evidence="1"/>
<dbReference type="EMBL" id="AL136128">
    <property type="status" value="NOT_ANNOTATED_CDS"/>
    <property type="molecule type" value="Genomic_DNA"/>
</dbReference>
<dbReference type="EMBL" id="AL355296">
    <property type="status" value="NOT_ANNOTATED_CDS"/>
    <property type="molecule type" value="Genomic_DNA"/>
</dbReference>
<dbReference type="EMBL" id="BC026087">
    <property type="protein sequence ID" value="AAH26087.1"/>
    <property type="molecule type" value="mRNA"/>
</dbReference>
<dbReference type="CCDS" id="CCDS5129.1">
    <molecule id="Q8TC41-2"/>
</dbReference>
<dbReference type="CCDS" id="CCDS69191.1">
    <molecule id="Q8TC41-1"/>
</dbReference>
<dbReference type="RefSeq" id="NP_001273327.1">
    <molecule id="Q8TC41-1"/>
    <property type="nucleotide sequence ID" value="NM_001286398.3"/>
</dbReference>
<dbReference type="RefSeq" id="NP_689766.1">
    <molecule id="Q8TC41-2"/>
    <property type="nucleotide sequence ID" value="NM_152553.5"/>
</dbReference>
<dbReference type="RefSeq" id="XP_047274205.1">
    <molecule id="Q8TC41-2"/>
    <property type="nucleotide sequence ID" value="XM_047418249.1"/>
</dbReference>
<dbReference type="RefSeq" id="XP_054210352.1">
    <molecule id="Q8TC41-2"/>
    <property type="nucleotide sequence ID" value="XM_054354377.1"/>
</dbReference>
<dbReference type="BioGRID" id="127540">
    <property type="interactions" value="10"/>
</dbReference>
<dbReference type="FunCoup" id="Q8TC41">
    <property type="interactions" value="163"/>
</dbReference>
<dbReference type="IntAct" id="Q8TC41">
    <property type="interactions" value="4"/>
</dbReference>
<dbReference type="STRING" id="9606.ENSP00000428698"/>
<dbReference type="iPTMnet" id="Q8TC41"/>
<dbReference type="PhosphoSitePlus" id="Q8TC41"/>
<dbReference type="BioMuta" id="RNF217"/>
<dbReference type="DMDM" id="313104196"/>
<dbReference type="jPOST" id="Q8TC41"/>
<dbReference type="MassIVE" id="Q8TC41"/>
<dbReference type="PaxDb" id="9606-ENSP00000428698"/>
<dbReference type="PeptideAtlas" id="Q8TC41"/>
<dbReference type="Antibodypedia" id="32675">
    <property type="antibodies" value="121 antibodies from 17 providers"/>
</dbReference>
<dbReference type="DNASU" id="154214"/>
<dbReference type="Ensembl" id="ENST00000359704.2">
    <molecule id="Q8TC41-2"/>
    <property type="protein sequence ID" value="ENSP00000352734.2"/>
    <property type="gene ID" value="ENSG00000146373.17"/>
</dbReference>
<dbReference type="Ensembl" id="ENST00000521654.7">
    <molecule id="Q8TC41-1"/>
    <property type="protein sequence ID" value="ENSP00000428698.2"/>
    <property type="gene ID" value="ENSG00000146373.17"/>
</dbReference>
<dbReference type="GeneID" id="154214"/>
<dbReference type="KEGG" id="hsa:154214"/>
<dbReference type="MANE-Select" id="ENST00000521654.7">
    <property type="protein sequence ID" value="ENSP00000428698.2"/>
    <property type="RefSeq nucleotide sequence ID" value="NM_001286398.3"/>
    <property type="RefSeq protein sequence ID" value="NP_001273327.1"/>
</dbReference>
<dbReference type="UCSC" id="uc003pzr.5">
    <molecule id="Q8TC41-1"/>
    <property type="organism name" value="human"/>
</dbReference>
<dbReference type="AGR" id="HGNC:21487"/>
<dbReference type="CTD" id="154214"/>
<dbReference type="DisGeNET" id="154214"/>
<dbReference type="GeneCards" id="RNF217"/>
<dbReference type="HGNC" id="HGNC:21487">
    <property type="gene designation" value="RNF217"/>
</dbReference>
<dbReference type="HPA" id="ENSG00000146373">
    <property type="expression patterns" value="Tissue enhanced (parathyroid)"/>
</dbReference>
<dbReference type="MIM" id="618592">
    <property type="type" value="gene"/>
</dbReference>
<dbReference type="neXtProt" id="NX_Q8TC41"/>
<dbReference type="OpenTargets" id="ENSG00000146373"/>
<dbReference type="PharmGKB" id="PA162401868"/>
<dbReference type="VEuPathDB" id="HostDB:ENSG00000146373"/>
<dbReference type="eggNOG" id="KOG1815">
    <property type="taxonomic scope" value="Eukaryota"/>
</dbReference>
<dbReference type="GeneTree" id="ENSGT00730000111285"/>
<dbReference type="HOGENOM" id="CLU_035717_1_0_1"/>
<dbReference type="InParanoid" id="Q8TC41"/>
<dbReference type="OrthoDB" id="10009520at2759"/>
<dbReference type="PAN-GO" id="Q8TC41">
    <property type="GO annotations" value="7 GO annotations based on evolutionary models"/>
</dbReference>
<dbReference type="PhylomeDB" id="Q8TC41"/>
<dbReference type="TreeFam" id="TF330860"/>
<dbReference type="PathwayCommons" id="Q8TC41"/>
<dbReference type="Reactome" id="R-HSA-983168">
    <property type="pathway name" value="Antigen processing: Ubiquitination &amp; Proteasome degradation"/>
</dbReference>
<dbReference type="SignaLink" id="Q8TC41"/>
<dbReference type="SIGNOR" id="Q8TC41"/>
<dbReference type="UniPathway" id="UPA00143"/>
<dbReference type="BioGRID-ORCS" id="154214">
    <property type="hits" value="9 hits in 1193 CRISPR screens"/>
</dbReference>
<dbReference type="ChiTaRS" id="RNF217">
    <property type="organism name" value="human"/>
</dbReference>
<dbReference type="GenomeRNAi" id="154214"/>
<dbReference type="Pharos" id="Q8TC41">
    <property type="development level" value="Tbio"/>
</dbReference>
<dbReference type="PRO" id="PR:Q8TC41"/>
<dbReference type="Proteomes" id="UP000005640">
    <property type="component" value="Chromosome 6"/>
</dbReference>
<dbReference type="RNAct" id="Q8TC41">
    <property type="molecule type" value="protein"/>
</dbReference>
<dbReference type="Bgee" id="ENSG00000146373">
    <property type="expression patterns" value="Expressed in oviduct epithelium and 164 other cell types or tissues"/>
</dbReference>
<dbReference type="ExpressionAtlas" id="Q8TC41">
    <property type="expression patterns" value="baseline and differential"/>
</dbReference>
<dbReference type="GO" id="GO:0005737">
    <property type="term" value="C:cytoplasm"/>
    <property type="evidence" value="ECO:0000318"/>
    <property type="project" value="GO_Central"/>
</dbReference>
<dbReference type="GO" id="GO:0005829">
    <property type="term" value="C:cytosol"/>
    <property type="evidence" value="ECO:0000304"/>
    <property type="project" value="Reactome"/>
</dbReference>
<dbReference type="GO" id="GO:0016020">
    <property type="term" value="C:membrane"/>
    <property type="evidence" value="ECO:0007669"/>
    <property type="project" value="UniProtKB-SubCell"/>
</dbReference>
<dbReference type="GO" id="GO:0000151">
    <property type="term" value="C:ubiquitin ligase complex"/>
    <property type="evidence" value="ECO:0000318"/>
    <property type="project" value="GO_Central"/>
</dbReference>
<dbReference type="GO" id="GO:0031624">
    <property type="term" value="F:ubiquitin conjugating enzyme binding"/>
    <property type="evidence" value="ECO:0000318"/>
    <property type="project" value="GO_Central"/>
</dbReference>
<dbReference type="GO" id="GO:0061630">
    <property type="term" value="F:ubiquitin protein ligase activity"/>
    <property type="evidence" value="ECO:0000318"/>
    <property type="project" value="GO_Central"/>
</dbReference>
<dbReference type="GO" id="GO:0004842">
    <property type="term" value="F:ubiquitin-protein transferase activity"/>
    <property type="evidence" value="ECO:0000250"/>
    <property type="project" value="UniProtKB"/>
</dbReference>
<dbReference type="GO" id="GO:0008270">
    <property type="term" value="F:zinc ion binding"/>
    <property type="evidence" value="ECO:0007669"/>
    <property type="project" value="UniProtKB-KW"/>
</dbReference>
<dbReference type="GO" id="GO:0016567">
    <property type="term" value="P:protein ubiquitination"/>
    <property type="evidence" value="ECO:0007669"/>
    <property type="project" value="UniProtKB-UniPathway"/>
</dbReference>
<dbReference type="GO" id="GO:0006511">
    <property type="term" value="P:ubiquitin-dependent protein catabolic process"/>
    <property type="evidence" value="ECO:0000250"/>
    <property type="project" value="UniProtKB"/>
</dbReference>
<dbReference type="CDD" id="cd20342">
    <property type="entry name" value="BRcat_RBR_RNF217"/>
    <property type="match status" value="1"/>
</dbReference>
<dbReference type="CDD" id="cd20350">
    <property type="entry name" value="Rcat_RBR_RNF217"/>
    <property type="match status" value="1"/>
</dbReference>
<dbReference type="CDD" id="cd16622">
    <property type="entry name" value="vRING-HC-C4C4_RBR_RNF217"/>
    <property type="match status" value="1"/>
</dbReference>
<dbReference type="FunFam" id="1.20.120.1750:FF:000008">
    <property type="entry name" value="RBR-type E3 ubiquitin transferase"/>
    <property type="match status" value="1"/>
</dbReference>
<dbReference type="FunFam" id="3.30.40.10:FF:000264">
    <property type="entry name" value="RBR-type E3 ubiquitin transferase"/>
    <property type="match status" value="1"/>
</dbReference>
<dbReference type="Gene3D" id="1.20.120.1750">
    <property type="match status" value="1"/>
</dbReference>
<dbReference type="Gene3D" id="3.30.40.10">
    <property type="entry name" value="Zinc/RING finger domain, C3HC4 (zinc finger)"/>
    <property type="match status" value="1"/>
</dbReference>
<dbReference type="InterPro" id="IPR047551">
    <property type="entry name" value="BRcat_RBR_RNF217"/>
</dbReference>
<dbReference type="InterPro" id="IPR031127">
    <property type="entry name" value="E3_UB_ligase_RBR"/>
</dbReference>
<dbReference type="InterPro" id="IPR002867">
    <property type="entry name" value="IBR_dom"/>
</dbReference>
<dbReference type="InterPro" id="IPR047552">
    <property type="entry name" value="Rcat_RBR_RNF217"/>
</dbReference>
<dbReference type="InterPro" id="IPR047550">
    <property type="entry name" value="RNF217_RBR_vRING-HC"/>
</dbReference>
<dbReference type="InterPro" id="IPR044066">
    <property type="entry name" value="TRIAD_supradom"/>
</dbReference>
<dbReference type="InterPro" id="IPR013083">
    <property type="entry name" value="Znf_RING/FYVE/PHD"/>
</dbReference>
<dbReference type="PANTHER" id="PTHR11685">
    <property type="entry name" value="RBR FAMILY RING FINGER AND IBR DOMAIN-CONTAINING"/>
    <property type="match status" value="1"/>
</dbReference>
<dbReference type="Pfam" id="PF01485">
    <property type="entry name" value="IBR"/>
    <property type="match status" value="1"/>
</dbReference>
<dbReference type="Pfam" id="PF22191">
    <property type="entry name" value="IBR_1"/>
    <property type="match status" value="1"/>
</dbReference>
<dbReference type="SMART" id="SM00647">
    <property type="entry name" value="IBR"/>
    <property type="match status" value="2"/>
</dbReference>
<dbReference type="SUPFAM" id="SSF57850">
    <property type="entry name" value="RING/U-box"/>
    <property type="match status" value="3"/>
</dbReference>
<dbReference type="PROSITE" id="PS51873">
    <property type="entry name" value="TRIAD"/>
    <property type="match status" value="1"/>
</dbReference>
<reference key="1">
    <citation type="journal article" date="2003" name="Nature">
        <title>The DNA sequence and analysis of human chromosome 6.</title>
        <authorList>
            <person name="Mungall A.J."/>
            <person name="Palmer S.A."/>
            <person name="Sims S.K."/>
            <person name="Edwards C.A."/>
            <person name="Ashurst J.L."/>
            <person name="Wilming L."/>
            <person name="Jones M.C."/>
            <person name="Horton R."/>
            <person name="Hunt S.E."/>
            <person name="Scott C.E."/>
            <person name="Gilbert J.G.R."/>
            <person name="Clamp M.E."/>
            <person name="Bethel G."/>
            <person name="Milne S."/>
            <person name="Ainscough R."/>
            <person name="Almeida J.P."/>
            <person name="Ambrose K.D."/>
            <person name="Andrews T.D."/>
            <person name="Ashwell R.I.S."/>
            <person name="Babbage A.K."/>
            <person name="Bagguley C.L."/>
            <person name="Bailey J."/>
            <person name="Banerjee R."/>
            <person name="Barker D.J."/>
            <person name="Barlow K.F."/>
            <person name="Bates K."/>
            <person name="Beare D.M."/>
            <person name="Beasley H."/>
            <person name="Beasley O."/>
            <person name="Bird C.P."/>
            <person name="Blakey S.E."/>
            <person name="Bray-Allen S."/>
            <person name="Brook J."/>
            <person name="Brown A.J."/>
            <person name="Brown J.Y."/>
            <person name="Burford D.C."/>
            <person name="Burrill W."/>
            <person name="Burton J."/>
            <person name="Carder C."/>
            <person name="Carter N.P."/>
            <person name="Chapman J.C."/>
            <person name="Clark S.Y."/>
            <person name="Clark G."/>
            <person name="Clee C.M."/>
            <person name="Clegg S."/>
            <person name="Cobley V."/>
            <person name="Collier R.E."/>
            <person name="Collins J.E."/>
            <person name="Colman L.K."/>
            <person name="Corby N.R."/>
            <person name="Coville G.J."/>
            <person name="Culley K.M."/>
            <person name="Dhami P."/>
            <person name="Davies J."/>
            <person name="Dunn M."/>
            <person name="Earthrowl M.E."/>
            <person name="Ellington A.E."/>
            <person name="Evans K.A."/>
            <person name="Faulkner L."/>
            <person name="Francis M.D."/>
            <person name="Frankish A."/>
            <person name="Frankland J."/>
            <person name="French L."/>
            <person name="Garner P."/>
            <person name="Garnett J."/>
            <person name="Ghori M.J."/>
            <person name="Gilby L.M."/>
            <person name="Gillson C.J."/>
            <person name="Glithero R.J."/>
            <person name="Grafham D.V."/>
            <person name="Grant M."/>
            <person name="Gribble S."/>
            <person name="Griffiths C."/>
            <person name="Griffiths M.N.D."/>
            <person name="Hall R."/>
            <person name="Halls K.S."/>
            <person name="Hammond S."/>
            <person name="Harley J.L."/>
            <person name="Hart E.A."/>
            <person name="Heath P.D."/>
            <person name="Heathcott R."/>
            <person name="Holmes S.J."/>
            <person name="Howden P.J."/>
            <person name="Howe K.L."/>
            <person name="Howell G.R."/>
            <person name="Huckle E."/>
            <person name="Humphray S.J."/>
            <person name="Humphries M.D."/>
            <person name="Hunt A.R."/>
            <person name="Johnson C.M."/>
            <person name="Joy A.A."/>
            <person name="Kay M."/>
            <person name="Keenan S.J."/>
            <person name="Kimberley A.M."/>
            <person name="King A."/>
            <person name="Laird G.K."/>
            <person name="Langford C."/>
            <person name="Lawlor S."/>
            <person name="Leongamornlert D.A."/>
            <person name="Leversha M."/>
            <person name="Lloyd C.R."/>
            <person name="Lloyd D.M."/>
            <person name="Loveland J.E."/>
            <person name="Lovell J."/>
            <person name="Martin S."/>
            <person name="Mashreghi-Mohammadi M."/>
            <person name="Maslen G.L."/>
            <person name="Matthews L."/>
            <person name="McCann O.T."/>
            <person name="McLaren S.J."/>
            <person name="McLay K."/>
            <person name="McMurray A."/>
            <person name="Moore M.J.F."/>
            <person name="Mullikin J.C."/>
            <person name="Niblett D."/>
            <person name="Nickerson T."/>
            <person name="Novik K.L."/>
            <person name="Oliver K."/>
            <person name="Overton-Larty E.K."/>
            <person name="Parker A."/>
            <person name="Patel R."/>
            <person name="Pearce A.V."/>
            <person name="Peck A.I."/>
            <person name="Phillimore B.J.C.T."/>
            <person name="Phillips S."/>
            <person name="Plumb R.W."/>
            <person name="Porter K.M."/>
            <person name="Ramsey Y."/>
            <person name="Ranby S.A."/>
            <person name="Rice C.M."/>
            <person name="Ross M.T."/>
            <person name="Searle S.M."/>
            <person name="Sehra H.K."/>
            <person name="Sheridan E."/>
            <person name="Skuce C.D."/>
            <person name="Smith S."/>
            <person name="Smith M."/>
            <person name="Spraggon L."/>
            <person name="Squares S.L."/>
            <person name="Steward C.A."/>
            <person name="Sycamore N."/>
            <person name="Tamlyn-Hall G."/>
            <person name="Tester J."/>
            <person name="Theaker A.J."/>
            <person name="Thomas D.W."/>
            <person name="Thorpe A."/>
            <person name="Tracey A."/>
            <person name="Tromans A."/>
            <person name="Tubby B."/>
            <person name="Wall M."/>
            <person name="Wallis J.M."/>
            <person name="West A.P."/>
            <person name="White S.S."/>
            <person name="Whitehead S.L."/>
            <person name="Whittaker H."/>
            <person name="Wild A."/>
            <person name="Willey D.J."/>
            <person name="Wilmer T.E."/>
            <person name="Wood J.M."/>
            <person name="Wray P.W."/>
            <person name="Wyatt J.C."/>
            <person name="Young L."/>
            <person name="Younger R.M."/>
            <person name="Bentley D.R."/>
            <person name="Coulson A."/>
            <person name="Durbin R.M."/>
            <person name="Hubbard T."/>
            <person name="Sulston J.E."/>
            <person name="Dunham I."/>
            <person name="Rogers J."/>
            <person name="Beck S."/>
        </authorList>
    </citation>
    <scope>NUCLEOTIDE SEQUENCE [LARGE SCALE GENOMIC DNA]</scope>
</reference>
<reference key="2">
    <citation type="journal article" date="2004" name="Genome Res.">
        <title>The status, quality, and expansion of the NIH full-length cDNA project: the Mammalian Gene Collection (MGC).</title>
        <authorList>
            <consortium name="The MGC Project Team"/>
        </authorList>
    </citation>
    <scope>NUCLEOTIDE SEQUENCE [LARGE SCALE MRNA] (ISOFORM 2)</scope>
    <source>
        <tissue>Testis</tissue>
    </source>
</reference>
<reference key="3">
    <citation type="journal article" date="2014" name="Sci. Rep.">
        <title>Identification and characterization of OSTL (RNF217) encoding a RING-IBR-RING protein adjacent to a translocation breakpoint involving ETV6 in childhood ALL.</title>
        <authorList>
            <person name="Fontanari Krause L.M."/>
            <person name="Japp A.S."/>
            <person name="Krause A."/>
            <person name="Mooster J."/>
            <person name="Chopra M."/>
            <person name="Mueschen M."/>
            <person name="Bohlander S.K."/>
        </authorList>
    </citation>
    <scope>SUBCELLULAR LOCATION</scope>
    <scope>INTERACTION WITH HAX1</scope>
    <scope>TISSUE SPECIFICITY</scope>
</reference>
<evidence type="ECO:0000250" key="1">
    <source>
        <dbReference type="UniProtKB" id="D3YYI7"/>
    </source>
</evidence>
<evidence type="ECO:0000250" key="2">
    <source>
        <dbReference type="UniProtKB" id="O60260"/>
    </source>
</evidence>
<evidence type="ECO:0000255" key="3"/>
<evidence type="ECO:0000255" key="4">
    <source>
        <dbReference type="PROSITE-ProRule" id="PRU01221"/>
    </source>
</evidence>
<evidence type="ECO:0000256" key="5">
    <source>
        <dbReference type="SAM" id="MobiDB-lite"/>
    </source>
</evidence>
<evidence type="ECO:0000269" key="6">
    <source>
    </source>
</evidence>
<evidence type="ECO:0000303" key="7">
    <source>
    </source>
</evidence>
<evidence type="ECO:0000303" key="8">
    <source>
    </source>
</evidence>
<evidence type="ECO:0000305" key="9"/>
<protein>
    <recommendedName>
        <fullName>E3 ubiquitin-protein ligase RNF217</fullName>
        <ecNumber evidence="1">2.3.2.31</ecNumber>
    </recommendedName>
    <alternativeName>
        <fullName>IBR domain-containing protein 1</fullName>
    </alternativeName>
    <alternativeName>
        <fullName evidence="8">Opposite STL</fullName>
    </alternativeName>
    <alternativeName>
        <fullName>RING finger protein 217</fullName>
    </alternativeName>
</protein>